<dbReference type="EMBL" id="D37793">
    <property type="protein sequence ID" value="BAA07041.1"/>
    <property type="molecule type" value="mRNA"/>
</dbReference>
<dbReference type="EMBL" id="AF257303">
    <property type="protein sequence ID" value="AAF68987.1"/>
    <property type="molecule type" value="Genomic_DNA"/>
</dbReference>
<dbReference type="EMBL" id="AF257304">
    <property type="protein sequence ID" value="AAF68988.1"/>
    <property type="molecule type" value="mRNA"/>
</dbReference>
<dbReference type="EMBL" id="AK036357">
    <property type="protein sequence ID" value="BAC29397.1"/>
    <property type="molecule type" value="mRNA"/>
</dbReference>
<dbReference type="EMBL" id="BC027019">
    <property type="protein sequence ID" value="AAH27019.1"/>
    <property type="molecule type" value="mRNA"/>
</dbReference>
<dbReference type="CCDS" id="CCDS15312.1"/>
<dbReference type="PIR" id="A55417">
    <property type="entry name" value="A55417"/>
</dbReference>
<dbReference type="RefSeq" id="NP_033333.2">
    <property type="nucleotide sequence ID" value="NM_009307.3"/>
</dbReference>
<dbReference type="RefSeq" id="XP_006529385.1">
    <property type="nucleotide sequence ID" value="XM_006529322.1"/>
</dbReference>
<dbReference type="RefSeq" id="XP_006529386.1">
    <property type="nucleotide sequence ID" value="XM_006529323.3"/>
</dbReference>
<dbReference type="PDB" id="2NP0">
    <property type="method" value="X-ray"/>
    <property type="resolution" value="2.62 A"/>
    <property type="chains" value="B=40-60"/>
</dbReference>
<dbReference type="PDB" id="4KBB">
    <property type="method" value="X-ray"/>
    <property type="resolution" value="2.30 A"/>
    <property type="chains" value="C/D=8-61"/>
</dbReference>
<dbReference type="PDBsum" id="2NP0"/>
<dbReference type="PDBsum" id="4KBB"/>
<dbReference type="SMR" id="P46097"/>
<dbReference type="BioGRID" id="203612">
    <property type="interactions" value="25"/>
</dbReference>
<dbReference type="DIP" id="DIP-32645N"/>
<dbReference type="FunCoup" id="P46097">
    <property type="interactions" value="397"/>
</dbReference>
<dbReference type="IntAct" id="P46097">
    <property type="interactions" value="10"/>
</dbReference>
<dbReference type="MINT" id="P46097"/>
<dbReference type="STRING" id="10090.ENSMUSP00000112438"/>
<dbReference type="GlyCosmos" id="P46097">
    <property type="glycosylation" value="1 site, No reported glycans"/>
</dbReference>
<dbReference type="GlyGen" id="P46097">
    <property type="glycosylation" value="2 sites, 1 N-linked glycan (1 site)"/>
</dbReference>
<dbReference type="iPTMnet" id="P46097"/>
<dbReference type="PhosphoSitePlus" id="P46097"/>
<dbReference type="SwissPalm" id="P46097"/>
<dbReference type="PaxDb" id="10090-ENSMUSP00000112438"/>
<dbReference type="PeptideAtlas" id="P46097"/>
<dbReference type="ProteomicsDB" id="254797"/>
<dbReference type="DNASU" id="20980"/>
<dbReference type="GeneID" id="20980"/>
<dbReference type="KEGG" id="mmu:20980"/>
<dbReference type="UCSC" id="uc007csj.1">
    <property type="organism name" value="mouse"/>
</dbReference>
<dbReference type="AGR" id="MGI:99666"/>
<dbReference type="CTD" id="127833"/>
<dbReference type="MGI" id="MGI:99666">
    <property type="gene designation" value="Syt2"/>
</dbReference>
<dbReference type="eggNOG" id="KOG1028">
    <property type="taxonomic scope" value="Eukaryota"/>
</dbReference>
<dbReference type="InParanoid" id="P46097"/>
<dbReference type="OrthoDB" id="67700at2759"/>
<dbReference type="PhylomeDB" id="P46097"/>
<dbReference type="TreeFam" id="TF315600"/>
<dbReference type="Reactome" id="R-MMU-8856825">
    <property type="pathway name" value="Cargo recognition for clathrin-mediated endocytosis"/>
</dbReference>
<dbReference type="Reactome" id="R-MMU-8856828">
    <property type="pathway name" value="Clathrin-mediated endocytosis"/>
</dbReference>
<dbReference type="BioGRID-ORCS" id="20980">
    <property type="hits" value="3 hits in 79 CRISPR screens"/>
</dbReference>
<dbReference type="CD-CODE" id="CE726F99">
    <property type="entry name" value="Postsynaptic density"/>
</dbReference>
<dbReference type="PRO" id="PR:P46097"/>
<dbReference type="Proteomes" id="UP000000589">
    <property type="component" value="Unplaced"/>
</dbReference>
<dbReference type="RNAct" id="P46097">
    <property type="molecule type" value="protein"/>
</dbReference>
<dbReference type="GO" id="GO:0030424">
    <property type="term" value="C:axon"/>
    <property type="evidence" value="ECO:0000314"/>
    <property type="project" value="MGI"/>
</dbReference>
<dbReference type="GO" id="GO:0042584">
    <property type="term" value="C:chromaffin granule membrane"/>
    <property type="evidence" value="ECO:0007669"/>
    <property type="project" value="UniProtKB-SubCell"/>
</dbReference>
<dbReference type="GO" id="GO:0031594">
    <property type="term" value="C:neuromuscular junction"/>
    <property type="evidence" value="ECO:0000314"/>
    <property type="project" value="SynGO"/>
</dbReference>
<dbReference type="GO" id="GO:0005886">
    <property type="term" value="C:plasma membrane"/>
    <property type="evidence" value="ECO:0000314"/>
    <property type="project" value="MGI"/>
</dbReference>
<dbReference type="GO" id="GO:0030672">
    <property type="term" value="C:synaptic vesicle membrane"/>
    <property type="evidence" value="ECO:0007669"/>
    <property type="project" value="UniProtKB-SubCell"/>
</dbReference>
<dbReference type="GO" id="GO:0005509">
    <property type="term" value="F:calcium ion binding"/>
    <property type="evidence" value="ECO:0000314"/>
    <property type="project" value="MGI"/>
</dbReference>
<dbReference type="GO" id="GO:0005544">
    <property type="term" value="F:calcium-dependent phospholipid binding"/>
    <property type="evidence" value="ECO:0000314"/>
    <property type="project" value="UniProtKB"/>
</dbReference>
<dbReference type="GO" id="GO:0043533">
    <property type="term" value="F:inositol 1,3,4,5 tetrakisphosphate binding"/>
    <property type="evidence" value="ECO:0000314"/>
    <property type="project" value="UniProtKB"/>
</dbReference>
<dbReference type="GO" id="GO:0001786">
    <property type="term" value="F:phosphatidylserine binding"/>
    <property type="evidence" value="ECO:0000314"/>
    <property type="project" value="ParkinsonsUK-UCL"/>
</dbReference>
<dbReference type="GO" id="GO:0099502">
    <property type="term" value="P:calcium-dependent activation of synaptic vesicle fusion"/>
    <property type="evidence" value="ECO:0000314"/>
    <property type="project" value="SynGO"/>
</dbReference>
<dbReference type="GO" id="GO:0030154">
    <property type="term" value="P:cell differentiation"/>
    <property type="evidence" value="ECO:0007669"/>
    <property type="project" value="UniProtKB-KW"/>
</dbReference>
<dbReference type="CDD" id="cd08385">
    <property type="entry name" value="C2A_Synaptotagmin-1-5-6-9-10"/>
    <property type="match status" value="1"/>
</dbReference>
<dbReference type="CDD" id="cd08402">
    <property type="entry name" value="C2B_Synaptotagmin-1"/>
    <property type="match status" value="1"/>
</dbReference>
<dbReference type="CDD" id="cd21964">
    <property type="entry name" value="Syt2_N"/>
    <property type="match status" value="1"/>
</dbReference>
<dbReference type="FunFam" id="2.60.40.150:FF:000007">
    <property type="entry name" value="Synaptotagmin 1"/>
    <property type="match status" value="1"/>
</dbReference>
<dbReference type="FunFam" id="2.60.40.150:FF:000016">
    <property type="entry name" value="Synaptotagmin 1"/>
    <property type="match status" value="1"/>
</dbReference>
<dbReference type="Gene3D" id="2.60.40.150">
    <property type="entry name" value="C2 domain"/>
    <property type="match status" value="2"/>
</dbReference>
<dbReference type="InterPro" id="IPR000008">
    <property type="entry name" value="C2_dom"/>
</dbReference>
<dbReference type="InterPro" id="IPR035892">
    <property type="entry name" value="C2_domain_sf"/>
</dbReference>
<dbReference type="InterPro" id="IPR001565">
    <property type="entry name" value="Synaptotagmin"/>
</dbReference>
<dbReference type="PANTHER" id="PTHR10024">
    <property type="entry name" value="SYNAPTOTAGMIN"/>
    <property type="match status" value="1"/>
</dbReference>
<dbReference type="PANTHER" id="PTHR10024:SF223">
    <property type="entry name" value="SYNAPTOTAGMIN-2"/>
    <property type="match status" value="1"/>
</dbReference>
<dbReference type="Pfam" id="PF00168">
    <property type="entry name" value="C2"/>
    <property type="match status" value="2"/>
</dbReference>
<dbReference type="PRINTS" id="PR00360">
    <property type="entry name" value="C2DOMAIN"/>
</dbReference>
<dbReference type="PRINTS" id="PR00399">
    <property type="entry name" value="SYNAPTOTAGMN"/>
</dbReference>
<dbReference type="SMART" id="SM00239">
    <property type="entry name" value="C2"/>
    <property type="match status" value="2"/>
</dbReference>
<dbReference type="SUPFAM" id="SSF49562">
    <property type="entry name" value="C2 domain (Calcium/lipid-binding domain, CaLB)"/>
    <property type="match status" value="2"/>
</dbReference>
<dbReference type="PROSITE" id="PS50004">
    <property type="entry name" value="C2"/>
    <property type="match status" value="2"/>
</dbReference>
<accession>P46097</accession>
<accession>Q8R0E1</accession>
<organism>
    <name type="scientific">Mus musculus</name>
    <name type="common">Mouse</name>
    <dbReference type="NCBI Taxonomy" id="10090"/>
    <lineage>
        <taxon>Eukaryota</taxon>
        <taxon>Metazoa</taxon>
        <taxon>Chordata</taxon>
        <taxon>Craniata</taxon>
        <taxon>Vertebrata</taxon>
        <taxon>Euteleostomi</taxon>
        <taxon>Mammalia</taxon>
        <taxon>Eutheria</taxon>
        <taxon>Euarchontoglires</taxon>
        <taxon>Glires</taxon>
        <taxon>Rodentia</taxon>
        <taxon>Myomorpha</taxon>
        <taxon>Muroidea</taxon>
        <taxon>Muridae</taxon>
        <taxon>Murinae</taxon>
        <taxon>Mus</taxon>
        <taxon>Mus</taxon>
    </lineage>
</organism>
<keyword id="KW-0002">3D-structure</keyword>
<keyword id="KW-0106">Calcium</keyword>
<keyword id="KW-0963">Cytoplasm</keyword>
<keyword id="KW-0968">Cytoplasmic vesicle</keyword>
<keyword id="KW-0221">Differentiation</keyword>
<keyword id="KW-0325">Glycoprotein</keyword>
<keyword id="KW-0472">Membrane</keyword>
<keyword id="KW-0479">Metal-binding</keyword>
<keyword id="KW-0597">Phosphoprotein</keyword>
<keyword id="KW-1185">Reference proteome</keyword>
<keyword id="KW-0677">Repeat</keyword>
<keyword id="KW-0770">Synapse</keyword>
<keyword id="KW-0812">Transmembrane</keyword>
<keyword id="KW-1133">Transmembrane helix</keyword>
<feature type="chain" id="PRO_0000183943" description="Synaptotagmin-2">
    <location>
        <begin position="1"/>
        <end position="422"/>
    </location>
</feature>
<feature type="topological domain" description="Vesicular" evidence="4">
    <location>
        <begin position="1"/>
        <end position="60"/>
    </location>
</feature>
<feature type="transmembrane region" description="Helical" evidence="4">
    <location>
        <begin position="61"/>
        <end position="87"/>
    </location>
</feature>
<feature type="topological domain" description="Cytoplasmic" evidence="4">
    <location>
        <begin position="88"/>
        <end position="422"/>
    </location>
</feature>
<feature type="domain" description="C2 1" evidence="5">
    <location>
        <begin position="142"/>
        <end position="261"/>
    </location>
</feature>
<feature type="domain" description="C2 2" evidence="5">
    <location>
        <begin position="273"/>
        <end position="406"/>
    </location>
</feature>
<feature type="region of interest" description="Disordered" evidence="6">
    <location>
        <begin position="1"/>
        <end position="43"/>
    </location>
</feature>
<feature type="region of interest" description="Disordered" evidence="6">
    <location>
        <begin position="102"/>
        <end position="141"/>
    </location>
</feature>
<feature type="region of interest" description="Phospholipid binding" evidence="14">
    <location>
        <begin position="136"/>
        <end position="382"/>
    </location>
</feature>
<feature type="compositionally biased region" description="Low complexity" evidence="6">
    <location>
        <begin position="14"/>
        <end position="30"/>
    </location>
</feature>
<feature type="compositionally biased region" description="Polar residues" evidence="6">
    <location>
        <begin position="31"/>
        <end position="40"/>
    </location>
</feature>
<feature type="compositionally biased region" description="Acidic residues" evidence="6">
    <location>
        <begin position="119"/>
        <end position="139"/>
    </location>
</feature>
<feature type="binding site" evidence="5">
    <location>
        <position position="172"/>
    </location>
    <ligand>
        <name>Ca(2+)</name>
        <dbReference type="ChEBI" id="CHEBI:29108"/>
        <label>2</label>
    </ligand>
</feature>
<feature type="binding site" evidence="5">
    <location>
        <position position="173"/>
    </location>
    <ligand>
        <name>Ca(2+)</name>
        <dbReference type="ChEBI" id="CHEBI:29108"/>
        <label>1</label>
    </ligand>
</feature>
<feature type="binding site" evidence="5">
    <location>
        <position position="173"/>
    </location>
    <ligand>
        <name>Ca(2+)</name>
        <dbReference type="ChEBI" id="CHEBI:29108"/>
        <label>2</label>
    </ligand>
</feature>
<feature type="binding site" evidence="5">
    <location>
        <position position="179"/>
    </location>
    <ligand>
        <name>Ca(2+)</name>
        <dbReference type="ChEBI" id="CHEBI:29108"/>
        <label>1</label>
    </ligand>
</feature>
<feature type="binding site" evidence="5">
    <location>
        <position position="231"/>
    </location>
    <ligand>
        <name>Ca(2+)</name>
        <dbReference type="ChEBI" id="CHEBI:29108"/>
        <label>1</label>
    </ligand>
</feature>
<feature type="binding site" evidence="5">
    <location>
        <position position="231"/>
    </location>
    <ligand>
        <name>Ca(2+)</name>
        <dbReference type="ChEBI" id="CHEBI:29108"/>
        <label>2</label>
    </ligand>
</feature>
<feature type="binding site" evidence="5">
    <location>
        <position position="232"/>
    </location>
    <ligand>
        <name>Ca(2+)</name>
        <dbReference type="ChEBI" id="CHEBI:29108"/>
        <label>1</label>
    </ligand>
</feature>
<feature type="binding site" evidence="5">
    <location>
        <position position="233"/>
    </location>
    <ligand>
        <name>Ca(2+)</name>
        <dbReference type="ChEBI" id="CHEBI:29108"/>
        <label>1</label>
    </ligand>
</feature>
<feature type="binding site" evidence="5">
    <location>
        <position position="233"/>
    </location>
    <ligand>
        <name>Ca(2+)</name>
        <dbReference type="ChEBI" id="CHEBI:29108"/>
        <label>2</label>
    </ligand>
</feature>
<feature type="binding site" evidence="5">
    <location>
        <position position="233"/>
    </location>
    <ligand>
        <name>Ca(2+)</name>
        <dbReference type="ChEBI" id="CHEBI:29108"/>
        <label>3</label>
    </ligand>
</feature>
<feature type="binding site" evidence="5">
    <location>
        <position position="236"/>
    </location>
    <ligand>
        <name>Ca(2+)</name>
        <dbReference type="ChEBI" id="CHEBI:29108"/>
        <label>3</label>
    </ligand>
</feature>
<feature type="binding site" evidence="5">
    <location>
        <position position="237"/>
    </location>
    <ligand>
        <name>Ca(2+)</name>
        <dbReference type="ChEBI" id="CHEBI:29108"/>
        <label>3</label>
    </ligand>
</feature>
<feature type="binding site" evidence="5">
    <location>
        <position position="239"/>
    </location>
    <ligand>
        <name>Ca(2+)</name>
        <dbReference type="ChEBI" id="CHEBI:29108"/>
        <label>2</label>
    </ligand>
</feature>
<feature type="binding site" evidence="5">
    <location>
        <position position="239"/>
    </location>
    <ligand>
        <name>Ca(2+)</name>
        <dbReference type="ChEBI" id="CHEBI:29108"/>
        <label>3</label>
    </ligand>
</feature>
<feature type="binding site" evidence="5">
    <location>
        <position position="304"/>
    </location>
    <ligand>
        <name>Ca(2+)</name>
        <dbReference type="ChEBI" id="CHEBI:29108"/>
        <label>4</label>
    </ligand>
</feature>
<feature type="binding site" evidence="5">
    <location>
        <position position="310"/>
    </location>
    <ligand>
        <name>Ca(2+)</name>
        <dbReference type="ChEBI" id="CHEBI:29108"/>
        <label>4</label>
    </ligand>
</feature>
<feature type="binding site" evidence="5">
    <location>
        <position position="364"/>
    </location>
    <ligand>
        <name>Ca(2+)</name>
        <dbReference type="ChEBI" id="CHEBI:29108"/>
        <label>4</label>
    </ligand>
</feature>
<feature type="binding site" evidence="5">
    <location>
        <position position="366"/>
    </location>
    <ligand>
        <name>Ca(2+)</name>
        <dbReference type="ChEBI" id="CHEBI:29108"/>
        <label>4</label>
    </ligand>
</feature>
<feature type="modified residue" description="Phosphothreonine" evidence="2">
    <location>
        <position position="125"/>
    </location>
</feature>
<feature type="modified residue" description="Phosphothreonine" evidence="21">
    <location>
        <position position="128"/>
    </location>
</feature>
<feature type="modified residue" description="Phosphothreonine" evidence="2">
    <location>
        <position position="202"/>
    </location>
</feature>
<feature type="modified residue" description="Phosphotyrosine" evidence="20">
    <location>
        <position position="230"/>
    </location>
</feature>
<feature type="modified residue" description="Phosphothreonine" evidence="2">
    <location>
        <position position="386"/>
    </location>
</feature>
<feature type="glycosylation site" description="N-linked (GlcNAc...) asparagine" evidence="4">
    <location>
        <position position="32"/>
    </location>
</feature>
<feature type="mutagenesis site" description="No binding to C.botulinum neurotoxin type B (BoNT/B, botB). Requires gangliosides to bind BoNT/B, wild-type binding to BoNT/G." evidence="8 9">
    <original>F</original>
    <variation>A</variation>
    <location>
        <position position="47"/>
    </location>
</feature>
<feature type="mutagenesis site" description="Wild-type binding to BoNT/B." evidence="8">
    <original>AKLKE</original>
    <variation>SKLKQ</variation>
    <location>
        <begin position="48"/>
        <end position="52"/>
    </location>
</feature>
<feature type="mutagenesis site" description="Wild-type in binding to C.botulinum neurotoxin type G (BoNT/G, botG)." evidence="9">
    <original>L</original>
    <variation>A</variation>
    <location>
        <position position="50"/>
    </location>
</feature>
<feature type="mutagenesis site" description="Wild-type binding to BoNT/B. Wild-type in binding to BoNT/G." evidence="8 9">
    <original>EKFF</original>
    <variation>QKFM</variation>
    <location>
        <begin position="52"/>
        <end position="55"/>
    </location>
</feature>
<feature type="mutagenesis site" description="Wild-type binding to BoNT/B." evidence="8">
    <original>E</original>
    <variation>A</variation>
    <location>
        <position position="52"/>
    </location>
</feature>
<feature type="mutagenesis site" description="No binding to BoNT/B. No binding to BoNT/G." evidence="8 9">
    <original>F</original>
    <variation>A</variation>
    <location>
        <position position="54"/>
    </location>
</feature>
<feature type="mutagenesis site" description="Requires gangliosides to bind BoNT/B, no binding to BoNT/G with or without gangliosides." evidence="9">
    <original>F</original>
    <variation>M</variation>
    <location>
        <position position="54"/>
    </location>
</feature>
<feature type="mutagenesis site" description="No binding to BoNT/B. Wild-type binding to BoNT/G." evidence="8 9">
    <original>F</original>
    <variation>A</variation>
    <location>
        <position position="55"/>
    </location>
</feature>
<feature type="mutagenesis site" description="Only binds to BoNT/B in presence of gangliosides." evidence="8">
    <original>IN</original>
    <variation>LH</variation>
    <location>
        <begin position="58"/>
        <end position="59"/>
    </location>
</feature>
<feature type="sequence conflict" description="In Ref. 3; BAC29397 and 4; AAH27019." evidence="14" ref="3 4">
    <original>A</original>
    <variation>G</variation>
    <location>
        <position position="221"/>
    </location>
</feature>
<feature type="helix" evidence="22">
    <location>
        <begin position="46"/>
        <end position="57"/>
    </location>
</feature>
<protein>
    <recommendedName>
        <fullName evidence="14">Synaptotagmin-2</fullName>
    </recommendedName>
    <alternativeName>
        <fullName evidence="13">Inositol polyphosphate-binding protein</fullName>
        <shortName evidence="13">IP4-binding protein</shortName>
        <shortName evidence="13">IP4BP</shortName>
    </alternativeName>
    <alternativeName>
        <fullName evidence="17">Synaptotagmin II</fullName>
        <shortName evidence="2">SytII</shortName>
    </alternativeName>
</protein>
<sequence length="422" mass="47263">MRNIFKRNQEPNVAPATTTATMPLAPVAPADNSTESTGPGESQEDMFAKLKEKFFNEINKIPLPPWALIAMAVVAGLLLLTCCFCICKKCCCKKKKNKKEKGKGMKNAMNMKDMKGGQDDDDAETGLTEGEGEGEEEKEPENLGKLQFSLDYDFQANQLTVGVLQAAELPALDMGGTSDPYVKVFLLPDKKKKYETKVHRKTLNPAFNETFTFKVPYQELAGKTLVMAIYDFDRFSKHDIIGEVKVPMNTVDLGQPIEEWRDLQGGEKEEPEKLGDICTSLRYVPTAGKLTVCILEAKNLKKMDVGGLSDPYVKIHLMQNGKRLKKKKTTVKKKTLNPYFNESFSFEIPFEQIQKVQVVVTVLDYDKLGKNEAIGKIFVGSNATGTELRHWSDMLANPRRPIAQWHSLKPEEEVDALLGKNK</sequence>
<gene>
    <name evidence="17" type="primary">Syt2</name>
</gene>
<comment type="function">
    <text evidence="3 12">Exhibits calcium-dependent phospholipid and inositol polyphosphate binding properties (PubMed:7961887). May have a regulatory role in the membrane interactions during trafficking of synaptic vesicles at the active zone of the synapse (PubMed:7961887). Plays a role in dendrite formation by melanocytes (By similarity).</text>
</comment>
<comment type="function">
    <text evidence="7 8 10">(Microbial infection) Receptor for C.botulinum neurotoxin type B (BoNT/B, botB); interaction is improved in the presence of gangliosides (PubMed:14504267). The toxin binds via the vesicular domain (residues 47-60) (PubMed:14504267, PubMed:17167418, PubMed:23807078).</text>
</comment>
<comment type="function">
    <text evidence="9">(Microbial infection) Receptor for C.botulinum neurotoxin type G (BoNT/G, botG); gangliosides are not required for (or only very slightly improve) binding to a membrane-anchored receptor fragment (PubMed:20219474). The toxin binds via the vesicular domain (residues 47-55) (PubMed:20219474).</text>
</comment>
<comment type="cofactor">
    <cofactor evidence="5">
        <name>Ca(2+)</name>
        <dbReference type="ChEBI" id="CHEBI:29108"/>
    </cofactor>
    <text evidence="1">Binds 3 Ca(2+) ions per subunit. The ions are bound to the C2 domains.</text>
</comment>
<comment type="subunit">
    <text evidence="2 3 11 14">Homotetramer (Probable). Heterodimer; heterodimerizes with SYT1 in presence of calcium (By similarity). Interacts with SCAMP5 (By similarity). Interacts with STON2 (By similarity). Interacts with PRRT2 (PubMed:27052163).</text>
</comment>
<comment type="subunit">
    <text evidence="7 8 10">(Microbial infection) Interacts with C.botulinum neurotoxin type B (BoNT/B, botB).</text>
</comment>
<comment type="subunit">
    <text evidence="9">(Microbial infection) Interacts with C.botulinum neurotoxin type G (BoNT/G, botG).</text>
</comment>
<comment type="interaction">
    <interactant intactId="EBI-457969">
        <id>P46097</id>
    </interactant>
    <interactant intactId="EBI-400878">
        <id>O35526</id>
        <label>Stx1a</label>
    </interactant>
    <organismsDiffer>false</organismsDiffer>
    <experiments>2</experiments>
</comment>
<comment type="interaction">
    <interactant intactId="EBI-457969">
        <id>P46097</id>
    </interactant>
    <interactant intactId="EBI-7661991">
        <id>P10844</id>
        <label>botB</label>
    </interactant>
    <organismsDiffer>true</organismsDiffer>
    <experiments>3</experiments>
</comment>
<comment type="interaction">
    <interactant intactId="EBI-457969">
        <id>P46097</id>
    </interactant>
    <interactant intactId="EBI-2695784">
        <id>Q8TAC9</id>
        <label>SCAMP5</label>
    </interactant>
    <organismsDiffer>true</organismsDiffer>
    <experiments>2</experiments>
</comment>
<comment type="subcellular location">
    <subcellularLocation>
        <location evidence="2">Cytoplasmic vesicle</location>
        <location evidence="2">Secretory vesicle</location>
        <location evidence="2">Synaptic vesicle membrane</location>
        <topology evidence="4">Single-pass membrane protein</topology>
    </subcellularLocation>
    <subcellularLocation>
        <location evidence="1">Cytoplasmic vesicle</location>
        <location evidence="1">Secretory vesicle</location>
        <location evidence="1">Chromaffin granule membrane</location>
        <topology evidence="2">Single-pass membrane protein</topology>
    </subcellularLocation>
    <subcellularLocation>
        <location evidence="2">Cytoplasm</location>
    </subcellularLocation>
</comment>
<comment type="domain">
    <text>The first C2 domain mediates Ca(2+)-dependent phospholipid binding (PubMed:7961887).</text>
</comment>
<comment type="domain">
    <text evidence="12">The second C2 domain mediates interaction with Stonin 2. The second C2 domain mediates phospholipid and inositol polyphosphate binding in a calcium-independent manner (PubMed:7961887).</text>
</comment>
<comment type="domain">
    <text evidence="15 16">(Microbial infection) Binding to BoNT/B induces formation of an alpha-helix in the membrane-proximal extracytoplasmic domain (PubMed:17167418, PubMed:23807078).</text>
</comment>
<comment type="PTM">
    <text evidence="2">Phosphorylation at Thr-202 by WNK1, changes the calcium requirement for SYT2-binding to phospholipid membranes.</text>
</comment>
<comment type="similarity">
    <text evidence="14">Belongs to the synaptotagmin family.</text>
</comment>
<name>SYT2_MOUSE</name>
<evidence type="ECO:0000250" key="1">
    <source>
        <dbReference type="UniProtKB" id="P21707"/>
    </source>
</evidence>
<evidence type="ECO:0000250" key="2">
    <source>
        <dbReference type="UniProtKB" id="P29101"/>
    </source>
</evidence>
<evidence type="ECO:0000250" key="3">
    <source>
        <dbReference type="UniProtKB" id="Q8N9I0"/>
    </source>
</evidence>
<evidence type="ECO:0000255" key="4"/>
<evidence type="ECO:0000255" key="5">
    <source>
        <dbReference type="PROSITE-ProRule" id="PRU00041"/>
    </source>
</evidence>
<evidence type="ECO:0000256" key="6">
    <source>
        <dbReference type="SAM" id="MobiDB-lite"/>
    </source>
</evidence>
<evidence type="ECO:0000269" key="7">
    <source>
    </source>
</evidence>
<evidence type="ECO:0000269" key="8">
    <source>
    </source>
</evidence>
<evidence type="ECO:0000269" key="9">
    <source>
    </source>
</evidence>
<evidence type="ECO:0000269" key="10">
    <source>
    </source>
</evidence>
<evidence type="ECO:0000269" key="11">
    <source>
    </source>
</evidence>
<evidence type="ECO:0000269" key="12">
    <source>
    </source>
</evidence>
<evidence type="ECO:0000303" key="13">
    <source>
    </source>
</evidence>
<evidence type="ECO:0000305" key="14"/>
<evidence type="ECO:0000305" key="15">
    <source>
    </source>
</evidence>
<evidence type="ECO:0000305" key="16">
    <source>
    </source>
</evidence>
<evidence type="ECO:0000312" key="17">
    <source>
        <dbReference type="MGI" id="MGI:99666"/>
    </source>
</evidence>
<evidence type="ECO:0007744" key="18">
    <source>
        <dbReference type="PDB" id="2NP0"/>
    </source>
</evidence>
<evidence type="ECO:0007744" key="19">
    <source>
        <dbReference type="PDB" id="4KBB"/>
    </source>
</evidence>
<evidence type="ECO:0007744" key="20">
    <source>
    </source>
</evidence>
<evidence type="ECO:0007744" key="21">
    <source>
    </source>
</evidence>
<evidence type="ECO:0007829" key="22">
    <source>
        <dbReference type="PDB" id="4KBB"/>
    </source>
</evidence>
<proteinExistence type="evidence at protein level"/>
<reference key="1">
    <citation type="journal article" date="1994" name="J. Biol. Chem.">
        <title>Inositol-1,3,4,5-tetrakisphosphate binding to C2B domain of IP4BP/synaptotagmin II.</title>
        <authorList>
            <person name="Fukuda M."/>
            <person name="Aruga J."/>
            <person name="Niinobe M."/>
            <person name="Aimoto S."/>
            <person name="Mikoshiba K."/>
        </authorList>
    </citation>
    <scope>NUCLEOTIDE SEQUENCE [MRNA]</scope>
    <scope>FUNCTION</scope>
    <scope>DOMAIN</scope>
</reference>
<reference key="2">
    <citation type="submission" date="2000-04" db="EMBL/GenBank/DDBJ databases">
        <title>Genomic structure of the murine Syt2 gene.</title>
        <authorList>
            <person name="Adachi R."/>
            <person name="Teich A.H."/>
            <person name="Nigam R."/>
        </authorList>
    </citation>
    <scope>NUCLEOTIDE SEQUENCE [GENOMIC DNA]</scope>
</reference>
<reference key="3">
    <citation type="journal article" date="2005" name="Science">
        <title>The transcriptional landscape of the mammalian genome.</title>
        <authorList>
            <person name="Carninci P."/>
            <person name="Kasukawa T."/>
            <person name="Katayama S."/>
            <person name="Gough J."/>
            <person name="Frith M.C."/>
            <person name="Maeda N."/>
            <person name="Oyama R."/>
            <person name="Ravasi T."/>
            <person name="Lenhard B."/>
            <person name="Wells C."/>
            <person name="Kodzius R."/>
            <person name="Shimokawa K."/>
            <person name="Bajic V.B."/>
            <person name="Brenner S.E."/>
            <person name="Batalov S."/>
            <person name="Forrest A.R."/>
            <person name="Zavolan M."/>
            <person name="Davis M.J."/>
            <person name="Wilming L.G."/>
            <person name="Aidinis V."/>
            <person name="Allen J.E."/>
            <person name="Ambesi-Impiombato A."/>
            <person name="Apweiler R."/>
            <person name="Aturaliya R.N."/>
            <person name="Bailey T.L."/>
            <person name="Bansal M."/>
            <person name="Baxter L."/>
            <person name="Beisel K.W."/>
            <person name="Bersano T."/>
            <person name="Bono H."/>
            <person name="Chalk A.M."/>
            <person name="Chiu K.P."/>
            <person name="Choudhary V."/>
            <person name="Christoffels A."/>
            <person name="Clutterbuck D.R."/>
            <person name="Crowe M.L."/>
            <person name="Dalla E."/>
            <person name="Dalrymple B.P."/>
            <person name="de Bono B."/>
            <person name="Della Gatta G."/>
            <person name="di Bernardo D."/>
            <person name="Down T."/>
            <person name="Engstrom P."/>
            <person name="Fagiolini M."/>
            <person name="Faulkner G."/>
            <person name="Fletcher C.F."/>
            <person name="Fukushima T."/>
            <person name="Furuno M."/>
            <person name="Futaki S."/>
            <person name="Gariboldi M."/>
            <person name="Georgii-Hemming P."/>
            <person name="Gingeras T.R."/>
            <person name="Gojobori T."/>
            <person name="Green R.E."/>
            <person name="Gustincich S."/>
            <person name="Harbers M."/>
            <person name="Hayashi Y."/>
            <person name="Hensch T.K."/>
            <person name="Hirokawa N."/>
            <person name="Hill D."/>
            <person name="Huminiecki L."/>
            <person name="Iacono M."/>
            <person name="Ikeo K."/>
            <person name="Iwama A."/>
            <person name="Ishikawa T."/>
            <person name="Jakt M."/>
            <person name="Kanapin A."/>
            <person name="Katoh M."/>
            <person name="Kawasawa Y."/>
            <person name="Kelso J."/>
            <person name="Kitamura H."/>
            <person name="Kitano H."/>
            <person name="Kollias G."/>
            <person name="Krishnan S.P."/>
            <person name="Kruger A."/>
            <person name="Kummerfeld S.K."/>
            <person name="Kurochkin I.V."/>
            <person name="Lareau L.F."/>
            <person name="Lazarevic D."/>
            <person name="Lipovich L."/>
            <person name="Liu J."/>
            <person name="Liuni S."/>
            <person name="McWilliam S."/>
            <person name="Madan Babu M."/>
            <person name="Madera M."/>
            <person name="Marchionni L."/>
            <person name="Matsuda H."/>
            <person name="Matsuzawa S."/>
            <person name="Miki H."/>
            <person name="Mignone F."/>
            <person name="Miyake S."/>
            <person name="Morris K."/>
            <person name="Mottagui-Tabar S."/>
            <person name="Mulder N."/>
            <person name="Nakano N."/>
            <person name="Nakauchi H."/>
            <person name="Ng P."/>
            <person name="Nilsson R."/>
            <person name="Nishiguchi S."/>
            <person name="Nishikawa S."/>
            <person name="Nori F."/>
            <person name="Ohara O."/>
            <person name="Okazaki Y."/>
            <person name="Orlando V."/>
            <person name="Pang K.C."/>
            <person name="Pavan W.J."/>
            <person name="Pavesi G."/>
            <person name="Pesole G."/>
            <person name="Petrovsky N."/>
            <person name="Piazza S."/>
            <person name="Reed J."/>
            <person name="Reid J.F."/>
            <person name="Ring B.Z."/>
            <person name="Ringwald M."/>
            <person name="Rost B."/>
            <person name="Ruan Y."/>
            <person name="Salzberg S.L."/>
            <person name="Sandelin A."/>
            <person name="Schneider C."/>
            <person name="Schoenbach C."/>
            <person name="Sekiguchi K."/>
            <person name="Semple C.A."/>
            <person name="Seno S."/>
            <person name="Sessa L."/>
            <person name="Sheng Y."/>
            <person name="Shibata Y."/>
            <person name="Shimada H."/>
            <person name="Shimada K."/>
            <person name="Silva D."/>
            <person name="Sinclair B."/>
            <person name="Sperling S."/>
            <person name="Stupka E."/>
            <person name="Sugiura K."/>
            <person name="Sultana R."/>
            <person name="Takenaka Y."/>
            <person name="Taki K."/>
            <person name="Tammoja K."/>
            <person name="Tan S.L."/>
            <person name="Tang S."/>
            <person name="Taylor M.S."/>
            <person name="Tegner J."/>
            <person name="Teichmann S.A."/>
            <person name="Ueda H.R."/>
            <person name="van Nimwegen E."/>
            <person name="Verardo R."/>
            <person name="Wei C.L."/>
            <person name="Yagi K."/>
            <person name="Yamanishi H."/>
            <person name="Zabarovsky E."/>
            <person name="Zhu S."/>
            <person name="Zimmer A."/>
            <person name="Hide W."/>
            <person name="Bult C."/>
            <person name="Grimmond S.M."/>
            <person name="Teasdale R.D."/>
            <person name="Liu E.T."/>
            <person name="Brusic V."/>
            <person name="Quackenbush J."/>
            <person name="Wahlestedt C."/>
            <person name="Mattick J.S."/>
            <person name="Hume D.A."/>
            <person name="Kai C."/>
            <person name="Sasaki D."/>
            <person name="Tomaru Y."/>
            <person name="Fukuda S."/>
            <person name="Kanamori-Katayama M."/>
            <person name="Suzuki M."/>
            <person name="Aoki J."/>
            <person name="Arakawa T."/>
            <person name="Iida J."/>
            <person name="Imamura K."/>
            <person name="Itoh M."/>
            <person name="Kato T."/>
            <person name="Kawaji H."/>
            <person name="Kawagashira N."/>
            <person name="Kawashima T."/>
            <person name="Kojima M."/>
            <person name="Kondo S."/>
            <person name="Konno H."/>
            <person name="Nakano K."/>
            <person name="Ninomiya N."/>
            <person name="Nishio T."/>
            <person name="Okada M."/>
            <person name="Plessy C."/>
            <person name="Shibata K."/>
            <person name="Shiraki T."/>
            <person name="Suzuki S."/>
            <person name="Tagami M."/>
            <person name="Waki K."/>
            <person name="Watahiki A."/>
            <person name="Okamura-Oho Y."/>
            <person name="Suzuki H."/>
            <person name="Kawai J."/>
            <person name="Hayashizaki Y."/>
        </authorList>
    </citation>
    <scope>NUCLEOTIDE SEQUENCE [LARGE SCALE MRNA]</scope>
    <source>
        <strain>C57BL/6J</strain>
        <tissue>Cerebellum</tissue>
    </source>
</reference>
<reference key="4">
    <citation type="journal article" date="2004" name="Genome Res.">
        <title>The status, quality, and expansion of the NIH full-length cDNA project: the Mammalian Gene Collection (MGC).</title>
        <authorList>
            <consortium name="The MGC Project Team"/>
        </authorList>
    </citation>
    <scope>NUCLEOTIDE SEQUENCE [LARGE SCALE MRNA]</scope>
    <source>
        <tissue>Eye</tissue>
    </source>
</reference>
<reference key="5">
    <citation type="journal article" date="2003" name="J. Cell Biol.">
        <title>Synaptotagmins I and II mediate entry of botulinum neurotoxin B into cells.</title>
        <authorList>
            <person name="Dong M."/>
            <person name="Richards D.A."/>
            <person name="Goodnough M.C."/>
            <person name="Tepp W.H."/>
            <person name="Johnson E.A."/>
            <person name="Chapman E.R."/>
        </authorList>
    </citation>
    <scope>FUNCTION AS C.BOTULINUM NEUROTOXIN TYPE B RECEPTOR (MICROBIAL INFECTION)</scope>
    <scope>SUBUNIT (MICROBIAL INFECTION)</scope>
</reference>
<reference key="6">
    <citation type="journal article" date="2008" name="J. Proteome Res.">
        <title>Large-scale identification and evolution indexing of tyrosine phosphorylation sites from murine brain.</title>
        <authorList>
            <person name="Ballif B.A."/>
            <person name="Carey G.R."/>
            <person name="Sunyaev S.R."/>
            <person name="Gygi S.P."/>
        </authorList>
    </citation>
    <scope>PHOSPHORYLATION [LARGE SCALE ANALYSIS] AT TYR-230</scope>
    <scope>IDENTIFICATION BY MASS SPECTROMETRY [LARGE SCALE ANALYSIS]</scope>
    <source>
        <tissue>Brain</tissue>
    </source>
</reference>
<reference key="7">
    <citation type="journal article" date="2010" name="Cell">
        <title>A tissue-specific atlas of mouse protein phosphorylation and expression.</title>
        <authorList>
            <person name="Huttlin E.L."/>
            <person name="Jedrychowski M.P."/>
            <person name="Elias J.E."/>
            <person name="Goswami T."/>
            <person name="Rad R."/>
            <person name="Beausoleil S.A."/>
            <person name="Villen J."/>
            <person name="Haas W."/>
            <person name="Sowa M.E."/>
            <person name="Gygi S.P."/>
        </authorList>
    </citation>
    <scope>PHOSPHORYLATION [LARGE SCALE ANALYSIS] AT THR-128</scope>
    <scope>IDENTIFICATION BY MASS SPECTROMETRY [LARGE SCALE ANALYSIS]</scope>
    <source>
        <tissue>Brain</tissue>
        <tissue>Brown adipose tissue</tissue>
    </source>
</reference>
<reference key="8">
    <citation type="journal article" date="2010" name="J. Mol. Biol.">
        <title>Crystal structure of the botulinum neurotoxin type G binding domain: insight into cell surface binding.</title>
        <authorList>
            <person name="Stenmark P."/>
            <person name="Dong M."/>
            <person name="Dupuy J."/>
            <person name="Chapman E.R."/>
            <person name="Stevens R.C."/>
        </authorList>
    </citation>
    <scope>FUNCTION AS C.BOTULINUM NEUROTOXIN TYPE G RECEPTOR (MICROBIAL INFECTION)</scope>
    <scope>SUBUNIT (MICROBIAL INFECTION)</scope>
    <scope>MUTAGENESIS OF PHE-47; LEU-50; GLU-52; PHE-54 AND PHE-55</scope>
</reference>
<reference key="9">
    <citation type="journal article" date="2016" name="Cell Rep.">
        <title>PRRT2 Is a Key Component of the Ca(2+)-Dependent Neurotransmitter Release Machinery.</title>
        <authorList>
            <person name="Valente P."/>
            <person name="Castroflorio E."/>
            <person name="Rossi P."/>
            <person name="Fadda M."/>
            <person name="Sterlini B."/>
            <person name="Cervigni R.I."/>
            <person name="Prestigio C."/>
            <person name="Giovedi S."/>
            <person name="Onofri F."/>
            <person name="Mura E."/>
            <person name="Guarnieri F.C."/>
            <person name="Marte A."/>
            <person name="Orlando M."/>
            <person name="Zara F."/>
            <person name="Fassio A."/>
            <person name="Valtorta F."/>
            <person name="Baldelli P."/>
            <person name="Corradi A."/>
            <person name="Benfenati F."/>
        </authorList>
    </citation>
    <scope>INTERACTION WITH PRRT2</scope>
</reference>
<reference evidence="18" key="10">
    <citation type="journal article" date="2006" name="Nature">
        <title>Structural basis of cell surface receptor recognition by botulinum neurotoxin B.</title>
        <authorList>
            <person name="Chai Q."/>
            <person name="Arndt J.W."/>
            <person name="Dong M."/>
            <person name="Tepp W.H."/>
            <person name="Johnson E.A."/>
            <person name="Chapman E.R."/>
            <person name="Stevens R.C."/>
        </authorList>
    </citation>
    <scope>X-RAY CRYSTALLOGRAPHY (2.62 ANGSTROMS) OF 40-60 IN COMPLEX WITH C.BOTULINUM NEUROTOXIN TYPE B</scope>
    <scope>FUNCTION AS C.BOTULINUM NEUROTOXIN TYPE B RECEPTOR (MICROBIAL INFECTION)</scope>
    <scope>SUBUNIT (MICROBIAL INFECTION)</scope>
    <scope>DOMAIN (MICROBIAL INFECTION)</scope>
    <scope>MUTAGENESIS OF PHE-47; 48-ALA--GLU-52; 52-GLU--PHE-55; GLU-52; PHE-54; PHE-55 AND 58-ILE-ASN-59</scope>
</reference>
<reference evidence="19" key="11">
    <citation type="journal article" date="2013" name="Nat. Commun.">
        <title>Structure of dual receptor binding to botulinum neurotoxin B.</title>
        <authorList>
            <person name="Berntsson R.P."/>
            <person name="Peng L."/>
            <person name="Dong M."/>
            <person name="Stenmark P."/>
        </authorList>
    </citation>
    <scope>X-RAY CRYSTALLOGRAPHY (2.30 ANGSTROMS) OF 8-61 IN COMPLEX WITH C.BOTULINUM NEUROTOXIN TYPE B AND GANGLIOSIDE GD1A</scope>
    <scope>SUBUNIT (MICROBIAL INFECTION)</scope>
    <scope>DOMAIN (MICROBIAL INFECTION)</scope>
</reference>